<evidence type="ECO:0000250" key="1"/>
<evidence type="ECO:0000305" key="2"/>
<dbReference type="EMBL" id="AP006878">
    <property type="protein sequence ID" value="BAD86221.1"/>
    <property type="molecule type" value="Genomic_DNA"/>
</dbReference>
<dbReference type="RefSeq" id="WP_011250982.1">
    <property type="nucleotide sequence ID" value="NC_006624.1"/>
</dbReference>
<dbReference type="SMR" id="Q5JDG6"/>
<dbReference type="STRING" id="69014.TK2032"/>
<dbReference type="EnsemblBacteria" id="BAD86221">
    <property type="protein sequence ID" value="BAD86221"/>
    <property type="gene ID" value="TK2032"/>
</dbReference>
<dbReference type="GeneID" id="78448567"/>
<dbReference type="KEGG" id="tko:TK2032"/>
<dbReference type="PATRIC" id="fig|69014.16.peg.1986"/>
<dbReference type="eggNOG" id="arCOG04231">
    <property type="taxonomic scope" value="Archaea"/>
</dbReference>
<dbReference type="HOGENOM" id="CLU_098807_3_1_2"/>
<dbReference type="InParanoid" id="Q5JDG6"/>
<dbReference type="OrthoDB" id="8015at2157"/>
<dbReference type="PhylomeDB" id="Q5JDG6"/>
<dbReference type="Proteomes" id="UP000000536">
    <property type="component" value="Chromosome"/>
</dbReference>
<dbReference type="GO" id="GO:0005737">
    <property type="term" value="C:cytoplasm"/>
    <property type="evidence" value="ECO:0007669"/>
    <property type="project" value="UniProtKB-SubCell"/>
</dbReference>
<dbReference type="GO" id="GO:0005507">
    <property type="term" value="F:copper ion binding"/>
    <property type="evidence" value="ECO:0000318"/>
    <property type="project" value="GO_Central"/>
</dbReference>
<dbReference type="GO" id="GO:0010038">
    <property type="term" value="P:response to metal ion"/>
    <property type="evidence" value="ECO:0007669"/>
    <property type="project" value="InterPro"/>
</dbReference>
<dbReference type="Gene3D" id="3.30.70.120">
    <property type="match status" value="1"/>
</dbReference>
<dbReference type="InterPro" id="IPR053426">
    <property type="entry name" value="CutA_tolerance"/>
</dbReference>
<dbReference type="InterPro" id="IPR004323">
    <property type="entry name" value="Ion_tolerance_CutA"/>
</dbReference>
<dbReference type="InterPro" id="IPR011322">
    <property type="entry name" value="N-reg_PII-like_a/b"/>
</dbReference>
<dbReference type="InterPro" id="IPR015867">
    <property type="entry name" value="N-reg_PII/ATP_PRibTrfase_C"/>
</dbReference>
<dbReference type="NCBIfam" id="NF041095">
    <property type="entry name" value="dival_cat_tol_CutA"/>
    <property type="match status" value="1"/>
</dbReference>
<dbReference type="PANTHER" id="PTHR23419">
    <property type="entry name" value="DIVALENT CATION TOLERANCE CUTA-RELATED"/>
    <property type="match status" value="1"/>
</dbReference>
<dbReference type="PANTHER" id="PTHR23419:SF8">
    <property type="entry name" value="FI09726P"/>
    <property type="match status" value="1"/>
</dbReference>
<dbReference type="Pfam" id="PF03091">
    <property type="entry name" value="CutA1"/>
    <property type="match status" value="1"/>
</dbReference>
<dbReference type="SUPFAM" id="SSF54913">
    <property type="entry name" value="GlnB-like"/>
    <property type="match status" value="1"/>
</dbReference>
<gene>
    <name type="primary">cutA</name>
    <name type="ordered locus">TK2032</name>
</gene>
<comment type="function">
    <text evidence="1">Involved in resistance toward heavy metals.</text>
</comment>
<comment type="cofactor">
    <cofactor evidence="2">
        <name>Cu cation</name>
        <dbReference type="ChEBI" id="CHEBI:23378"/>
    </cofactor>
    <text evidence="2">Binds 1 copper ion in the interface between two trimers.</text>
</comment>
<comment type="subunit">
    <text evidence="1">Homotrimer. The binding of the copper ion probably leads to oligomerization (By similarity).</text>
</comment>
<comment type="subcellular location">
    <subcellularLocation>
        <location evidence="1">Cytoplasm</location>
    </subcellularLocation>
</comment>
<comment type="similarity">
    <text evidence="2">Belongs to the CutA family.</text>
</comment>
<protein>
    <recommendedName>
        <fullName>Divalent-cation tolerance protein CutA</fullName>
    </recommendedName>
</protein>
<reference key="1">
    <citation type="journal article" date="2005" name="Genome Res.">
        <title>Complete genome sequence of the hyperthermophilic archaeon Thermococcus kodakaraensis KOD1 and comparison with Pyrococcus genomes.</title>
        <authorList>
            <person name="Fukui T."/>
            <person name="Atomi H."/>
            <person name="Kanai T."/>
            <person name="Matsumi R."/>
            <person name="Fujiwara S."/>
            <person name="Imanaka T."/>
        </authorList>
    </citation>
    <scope>NUCLEOTIDE SEQUENCE [LARGE SCALE GENOMIC DNA]</scope>
    <source>
        <strain>ATCC BAA-918 / JCM 12380 / KOD1</strain>
    </source>
</reference>
<accession>Q5JDG6</accession>
<proteinExistence type="inferred from homology"/>
<name>CUTA_THEKO</name>
<feature type="chain" id="PRO_0000157130" description="Divalent-cation tolerance protein CutA">
    <location>
        <begin position="1"/>
        <end position="104"/>
    </location>
</feature>
<keyword id="KW-0186">Copper</keyword>
<keyword id="KW-0963">Cytoplasm</keyword>
<keyword id="KW-0479">Metal-binding</keyword>
<keyword id="KW-1185">Reference proteome</keyword>
<organism>
    <name type="scientific">Thermococcus kodakarensis (strain ATCC BAA-918 / JCM 12380 / KOD1)</name>
    <name type="common">Pyrococcus kodakaraensis (strain KOD1)</name>
    <dbReference type="NCBI Taxonomy" id="69014"/>
    <lineage>
        <taxon>Archaea</taxon>
        <taxon>Methanobacteriati</taxon>
        <taxon>Methanobacteriota</taxon>
        <taxon>Thermococci</taxon>
        <taxon>Thermococcales</taxon>
        <taxon>Thermococcaceae</taxon>
        <taxon>Thermococcus</taxon>
    </lineage>
</organism>
<sequence>MEAIIVYTTFPDWESARKVTRELLERKLIVCANLREHEAMYWWEGKIEEGKEVGAIYKTEVSKWKELRETIKELHPYDVPMIARIDLDKLNREYSEWMARVLFG</sequence>